<reference key="1">
    <citation type="journal article" date="2001" name="Lancet">
        <title>Whole genome sequencing of meticillin-resistant Staphylococcus aureus.</title>
        <authorList>
            <person name="Kuroda M."/>
            <person name="Ohta T."/>
            <person name="Uchiyama I."/>
            <person name="Baba T."/>
            <person name="Yuzawa H."/>
            <person name="Kobayashi I."/>
            <person name="Cui L."/>
            <person name="Oguchi A."/>
            <person name="Aoki K."/>
            <person name="Nagai Y."/>
            <person name="Lian J.-Q."/>
            <person name="Ito T."/>
            <person name="Kanamori M."/>
            <person name="Matsumaru H."/>
            <person name="Maruyama A."/>
            <person name="Murakami H."/>
            <person name="Hosoyama A."/>
            <person name="Mizutani-Ui Y."/>
            <person name="Takahashi N.K."/>
            <person name="Sawano T."/>
            <person name="Inoue R."/>
            <person name="Kaito C."/>
            <person name="Sekimizu K."/>
            <person name="Hirakawa H."/>
            <person name="Kuhara S."/>
            <person name="Goto S."/>
            <person name="Yabuzaki J."/>
            <person name="Kanehisa M."/>
            <person name="Yamashita A."/>
            <person name="Oshima K."/>
            <person name="Furuya K."/>
            <person name="Yoshino C."/>
            <person name="Shiba T."/>
            <person name="Hattori M."/>
            <person name="Ogasawara N."/>
            <person name="Hayashi H."/>
            <person name="Hiramatsu K."/>
        </authorList>
    </citation>
    <scope>NUCLEOTIDE SEQUENCE [LARGE SCALE GENOMIC DNA]</scope>
    <source>
        <strain>N315</strain>
    </source>
</reference>
<reference key="2">
    <citation type="submission" date="2007-10" db="UniProtKB">
        <title>Shotgun proteomic analysis of total and membrane protein extracts of S. aureus strain N315.</title>
        <authorList>
            <person name="Vaezzadeh A.R."/>
            <person name="Deshusses J."/>
            <person name="Lescuyer P."/>
            <person name="Hochstrasser D.F."/>
        </authorList>
    </citation>
    <scope>IDENTIFICATION BY MASS SPECTROMETRY [LARGE SCALE ANALYSIS]</scope>
    <source>
        <strain>N315</strain>
    </source>
</reference>
<keyword id="KW-0002">3D-structure</keyword>
<name>Y1069_STAAN</name>
<feature type="chain" id="PRO_0000304161" description="Uncharacterized protein SA1069">
    <location>
        <begin position="1"/>
        <end position="548"/>
    </location>
</feature>
<feature type="domain" description="DhaL" evidence="1">
    <location>
        <begin position="8"/>
        <end position="200"/>
    </location>
</feature>
<feature type="helix" evidence="2">
    <location>
        <begin position="7"/>
        <end position="23"/>
    </location>
</feature>
<feature type="helix" evidence="2">
    <location>
        <begin position="25"/>
        <end position="31"/>
    </location>
</feature>
<feature type="strand" evidence="3">
    <location>
        <begin position="34"/>
        <end position="36"/>
    </location>
</feature>
<feature type="helix" evidence="2">
    <location>
        <begin position="41"/>
        <end position="57"/>
    </location>
</feature>
<feature type="helix" evidence="2">
    <location>
        <begin position="64"/>
        <end position="76"/>
    </location>
</feature>
<feature type="helix" evidence="2">
    <location>
        <begin position="81"/>
        <end position="97"/>
    </location>
</feature>
<feature type="turn" evidence="2">
    <location>
        <begin position="98"/>
        <end position="100"/>
    </location>
</feature>
<feature type="strand" evidence="2">
    <location>
        <begin position="102"/>
        <end position="104"/>
    </location>
</feature>
<feature type="helix" evidence="2">
    <location>
        <begin position="106"/>
        <end position="123"/>
    </location>
</feature>
<feature type="strand" evidence="2">
    <location>
        <begin position="124"/>
        <end position="126"/>
    </location>
</feature>
<feature type="strand" evidence="2">
    <location>
        <begin position="129"/>
        <end position="131"/>
    </location>
</feature>
<feature type="helix" evidence="2">
    <location>
        <begin position="132"/>
        <end position="147"/>
    </location>
</feature>
<feature type="helix" evidence="2">
    <location>
        <begin position="153"/>
        <end position="170"/>
    </location>
</feature>
<feature type="helix" evidence="2">
    <location>
        <begin position="171"/>
        <end position="173"/>
    </location>
</feature>
<feature type="helix" evidence="2">
    <location>
        <begin position="176"/>
        <end position="181"/>
    </location>
</feature>
<feature type="helix" evidence="2">
    <location>
        <begin position="186"/>
        <end position="202"/>
    </location>
</feature>
<organism>
    <name type="scientific">Staphylococcus aureus (strain N315)</name>
    <dbReference type="NCBI Taxonomy" id="158879"/>
    <lineage>
        <taxon>Bacteria</taxon>
        <taxon>Bacillati</taxon>
        <taxon>Bacillota</taxon>
        <taxon>Bacilli</taxon>
        <taxon>Bacillales</taxon>
        <taxon>Staphylococcaceae</taxon>
        <taxon>Staphylococcus</taxon>
    </lineage>
</organism>
<protein>
    <recommendedName>
        <fullName>Uncharacterized protein SA1069</fullName>
    </recommendedName>
</protein>
<dbReference type="EMBL" id="BA000018">
    <property type="protein sequence ID" value="BAB42321.1"/>
    <property type="molecule type" value="Genomic_DNA"/>
</dbReference>
<dbReference type="PIR" id="E89895">
    <property type="entry name" value="E89895"/>
</dbReference>
<dbReference type="PDB" id="7RM7">
    <property type="method" value="X-ray"/>
    <property type="resolution" value="1.02 A"/>
    <property type="chains" value="A=1-208"/>
</dbReference>
<dbReference type="PDB" id="7RZK">
    <property type="method" value="X-ray"/>
    <property type="resolution" value="1.90 A"/>
    <property type="chains" value="A=1-208"/>
</dbReference>
<dbReference type="PDB" id="7SNB">
    <property type="method" value="X-ray"/>
    <property type="resolution" value="1.11 A"/>
    <property type="chains" value="A=1-208"/>
</dbReference>
<dbReference type="PDB" id="7UQ1">
    <property type="method" value="X-ray"/>
    <property type="resolution" value="1.72 A"/>
    <property type="chains" value="A=1-208"/>
</dbReference>
<dbReference type="PDBsum" id="7RM7"/>
<dbReference type="PDBsum" id="7RZK"/>
<dbReference type="PDBsum" id="7SNB"/>
<dbReference type="PDBsum" id="7UQ1"/>
<dbReference type="SMR" id="Q7A5Z4"/>
<dbReference type="EnsemblBacteria" id="BAB42321">
    <property type="protein sequence ID" value="BAB42321"/>
    <property type="gene ID" value="BAB42321"/>
</dbReference>
<dbReference type="KEGG" id="sau:SA1069"/>
<dbReference type="HOGENOM" id="CLU_017496_1_0_9"/>
<dbReference type="GO" id="GO:0004371">
    <property type="term" value="F:glycerone kinase activity"/>
    <property type="evidence" value="ECO:0007669"/>
    <property type="project" value="InterPro"/>
</dbReference>
<dbReference type="GO" id="GO:0006071">
    <property type="term" value="P:glycerol metabolic process"/>
    <property type="evidence" value="ECO:0007669"/>
    <property type="project" value="InterPro"/>
</dbReference>
<dbReference type="Gene3D" id="1.25.40.340">
    <property type="match status" value="1"/>
</dbReference>
<dbReference type="InterPro" id="IPR050270">
    <property type="entry name" value="DegV_domain_contain"/>
</dbReference>
<dbReference type="InterPro" id="IPR004007">
    <property type="entry name" value="DhaL_dom"/>
</dbReference>
<dbReference type="InterPro" id="IPR036117">
    <property type="entry name" value="DhaL_dom_sf"/>
</dbReference>
<dbReference type="InterPro" id="IPR033470">
    <property type="entry name" value="FakA-like_C"/>
</dbReference>
<dbReference type="InterPro" id="IPR048394">
    <property type="entry name" value="FakA-like_M"/>
</dbReference>
<dbReference type="InterPro" id="IPR019986">
    <property type="entry name" value="YloV-like"/>
</dbReference>
<dbReference type="NCBIfam" id="NF038248">
    <property type="entry name" value="FakA_VfrB"/>
    <property type="match status" value="1"/>
</dbReference>
<dbReference type="NCBIfam" id="TIGR03599">
    <property type="entry name" value="YloV"/>
    <property type="match status" value="1"/>
</dbReference>
<dbReference type="PANTHER" id="PTHR33434">
    <property type="entry name" value="DEGV DOMAIN-CONTAINING PROTEIN DR_1986-RELATED"/>
    <property type="match status" value="1"/>
</dbReference>
<dbReference type="PANTHER" id="PTHR33434:SF4">
    <property type="entry name" value="PHOSPHATASE PROTEIN"/>
    <property type="match status" value="1"/>
</dbReference>
<dbReference type="Pfam" id="PF02734">
    <property type="entry name" value="Dak2"/>
    <property type="match status" value="1"/>
</dbReference>
<dbReference type="Pfam" id="PF13684">
    <property type="entry name" value="FakA-like_C"/>
    <property type="match status" value="1"/>
</dbReference>
<dbReference type="Pfam" id="PF21645">
    <property type="entry name" value="FakA-like_M"/>
    <property type="match status" value="1"/>
</dbReference>
<dbReference type="SMART" id="SM01121">
    <property type="entry name" value="Dak1_2"/>
    <property type="match status" value="1"/>
</dbReference>
<dbReference type="SMART" id="SM01120">
    <property type="entry name" value="Dak2"/>
    <property type="match status" value="1"/>
</dbReference>
<dbReference type="SUPFAM" id="SSF101473">
    <property type="entry name" value="DhaL-like"/>
    <property type="match status" value="1"/>
</dbReference>
<dbReference type="PROSITE" id="PS51480">
    <property type="entry name" value="DHAL"/>
    <property type="match status" value="1"/>
</dbReference>
<gene>
    <name type="ordered locus">SA1069</name>
</gene>
<sequence>MISKINGKLFADMIIQGAQNLSNNADLVDSLNVYPVPDGDTGTNMNLTMTSGREEVENNLSKNIGELGKTFSKGLLMGARGNSGVILSQLFRGFCKNIESESEINSKLLAESFQAGVETAYKAVMKPVEGTILTVAKDAAQAAIEKANNTEDCIELMEYIIVKANESLENTPNLLAVLKEVGVVDSGGKGLLCVYEGFLKALKGEKVEAKVAKIDKDEFVHDEHDFHGVINTEDIIYGYCTEMMVRFGKNKKAFDEQEFRQDMSQFGDSLLVINDEEIVKVHVHTEYPGKVFNYGQQYGELIKLKVENMREQHREVIRKEQHTAKPKMETVETAIITISMGEGISEIFKSMGATHIISGGQTMNPSTEDIVKVIEQSKCKRAIILPNNKNILMASEQAASIVDAEAVVIPTKSIPQGISALFQYDVDATLEENKAQMADSVNNVKSGSLTYAVRDTKIDGVEIKKDAFMGLIEDKIVSSQSDQLTTVTELLNEMLAEDSEILTVIIGQDAEQAVTDNMINWIEEQYPDVEVEVHEGGQPIYQYFFSVE</sequence>
<proteinExistence type="evidence at protein level"/>
<accession>Q7A5Z4</accession>
<evidence type="ECO:0000255" key="1">
    <source>
        <dbReference type="PROSITE-ProRule" id="PRU00813"/>
    </source>
</evidence>
<evidence type="ECO:0007829" key="2">
    <source>
        <dbReference type="PDB" id="7RM7"/>
    </source>
</evidence>
<evidence type="ECO:0007829" key="3">
    <source>
        <dbReference type="PDB" id="7RZK"/>
    </source>
</evidence>